<gene>
    <name evidence="1" type="primary">htpX</name>
    <name type="ordered locus">MRA_0570</name>
</gene>
<organism>
    <name type="scientific">Mycobacterium tuberculosis (strain ATCC 25177 / H37Ra)</name>
    <dbReference type="NCBI Taxonomy" id="419947"/>
    <lineage>
        <taxon>Bacteria</taxon>
        <taxon>Bacillati</taxon>
        <taxon>Actinomycetota</taxon>
        <taxon>Actinomycetes</taxon>
        <taxon>Mycobacteriales</taxon>
        <taxon>Mycobacteriaceae</taxon>
        <taxon>Mycobacterium</taxon>
        <taxon>Mycobacterium tuberculosis complex</taxon>
    </lineage>
</organism>
<proteinExistence type="inferred from homology"/>
<protein>
    <recommendedName>
        <fullName evidence="1">Protease HtpX homolog</fullName>
        <ecNumber evidence="1">3.4.24.-</ecNumber>
    </recommendedName>
</protein>
<comment type="cofactor">
    <cofactor evidence="1">
        <name>Zn(2+)</name>
        <dbReference type="ChEBI" id="CHEBI:29105"/>
    </cofactor>
    <text evidence="1">Binds 1 zinc ion per subunit.</text>
</comment>
<comment type="subcellular location">
    <subcellularLocation>
        <location evidence="1">Cell membrane</location>
        <topology evidence="1">Multi-pass membrane protein</topology>
    </subcellularLocation>
</comment>
<comment type="similarity">
    <text evidence="1">Belongs to the peptidase M48B family.</text>
</comment>
<name>HTPX_MYCTA</name>
<dbReference type="EC" id="3.4.24.-" evidence="1"/>
<dbReference type="EMBL" id="CP000611">
    <property type="protein sequence ID" value="ABQ72293.1"/>
    <property type="molecule type" value="Genomic_DNA"/>
</dbReference>
<dbReference type="RefSeq" id="WP_003402959.1">
    <property type="nucleotide sequence ID" value="NZ_CP016972.1"/>
</dbReference>
<dbReference type="KEGG" id="mra:MRA_0570"/>
<dbReference type="eggNOG" id="COG0501">
    <property type="taxonomic scope" value="Bacteria"/>
</dbReference>
<dbReference type="HOGENOM" id="CLU_042266_3_1_11"/>
<dbReference type="Proteomes" id="UP000001988">
    <property type="component" value="Chromosome"/>
</dbReference>
<dbReference type="GO" id="GO:0005886">
    <property type="term" value="C:plasma membrane"/>
    <property type="evidence" value="ECO:0007669"/>
    <property type="project" value="UniProtKB-SubCell"/>
</dbReference>
<dbReference type="GO" id="GO:0004222">
    <property type="term" value="F:metalloendopeptidase activity"/>
    <property type="evidence" value="ECO:0007669"/>
    <property type="project" value="UniProtKB-UniRule"/>
</dbReference>
<dbReference type="GO" id="GO:0008270">
    <property type="term" value="F:zinc ion binding"/>
    <property type="evidence" value="ECO:0007669"/>
    <property type="project" value="UniProtKB-UniRule"/>
</dbReference>
<dbReference type="GO" id="GO:0006508">
    <property type="term" value="P:proteolysis"/>
    <property type="evidence" value="ECO:0007669"/>
    <property type="project" value="UniProtKB-KW"/>
</dbReference>
<dbReference type="CDD" id="cd07336">
    <property type="entry name" value="M48B_HtpX_like"/>
    <property type="match status" value="1"/>
</dbReference>
<dbReference type="FunFam" id="3.30.2010.10:FF:000008">
    <property type="entry name" value="Protease HtpX homolog"/>
    <property type="match status" value="1"/>
</dbReference>
<dbReference type="Gene3D" id="3.30.2010.10">
    <property type="entry name" value="Metalloproteases ('zincins'), catalytic domain"/>
    <property type="match status" value="1"/>
</dbReference>
<dbReference type="HAMAP" id="MF_00188">
    <property type="entry name" value="Pept_M48_protease_HtpX"/>
    <property type="match status" value="1"/>
</dbReference>
<dbReference type="InterPro" id="IPR050083">
    <property type="entry name" value="HtpX_protease"/>
</dbReference>
<dbReference type="InterPro" id="IPR022919">
    <property type="entry name" value="Pept_M48_protease_HtpX"/>
</dbReference>
<dbReference type="InterPro" id="IPR001915">
    <property type="entry name" value="Peptidase_M48"/>
</dbReference>
<dbReference type="NCBIfam" id="NF002839">
    <property type="entry name" value="PRK03072.1"/>
    <property type="match status" value="1"/>
</dbReference>
<dbReference type="PANTHER" id="PTHR43221">
    <property type="entry name" value="PROTEASE HTPX"/>
    <property type="match status" value="1"/>
</dbReference>
<dbReference type="PANTHER" id="PTHR43221:SF1">
    <property type="entry name" value="PROTEASE HTPX"/>
    <property type="match status" value="1"/>
</dbReference>
<dbReference type="Pfam" id="PF01435">
    <property type="entry name" value="Peptidase_M48"/>
    <property type="match status" value="1"/>
</dbReference>
<dbReference type="PROSITE" id="PS00142">
    <property type="entry name" value="ZINC_PROTEASE"/>
    <property type="match status" value="1"/>
</dbReference>
<feature type="chain" id="PRO_1000020893" description="Protease HtpX homolog">
    <location>
        <begin position="1"/>
        <end position="286"/>
    </location>
</feature>
<feature type="transmembrane region" description="Helical" evidence="1">
    <location>
        <begin position="10"/>
        <end position="30"/>
    </location>
</feature>
<feature type="transmembrane region" description="Helical" evidence="1">
    <location>
        <begin position="33"/>
        <end position="53"/>
    </location>
</feature>
<feature type="transmembrane region" description="Helical" evidence="1">
    <location>
        <begin position="145"/>
        <end position="165"/>
    </location>
</feature>
<feature type="transmembrane region" description="Helical" evidence="1">
    <location>
        <begin position="181"/>
        <end position="201"/>
    </location>
</feature>
<feature type="active site" evidence="1">
    <location>
        <position position="136"/>
    </location>
</feature>
<feature type="binding site" evidence="1">
    <location>
        <position position="135"/>
    </location>
    <ligand>
        <name>Zn(2+)</name>
        <dbReference type="ChEBI" id="CHEBI:29105"/>
        <note>catalytic</note>
    </ligand>
</feature>
<feature type="binding site" evidence="1">
    <location>
        <position position="139"/>
    </location>
    <ligand>
        <name>Zn(2+)</name>
        <dbReference type="ChEBI" id="CHEBI:29105"/>
        <note>catalytic</note>
    </ligand>
</feature>
<feature type="binding site" evidence="1">
    <location>
        <position position="206"/>
    </location>
    <ligand>
        <name>Zn(2+)</name>
        <dbReference type="ChEBI" id="CHEBI:29105"/>
        <note>catalytic</note>
    </ligand>
</feature>
<keyword id="KW-1003">Cell membrane</keyword>
<keyword id="KW-0378">Hydrolase</keyword>
<keyword id="KW-0472">Membrane</keyword>
<keyword id="KW-0479">Metal-binding</keyword>
<keyword id="KW-0482">Metalloprotease</keyword>
<keyword id="KW-0645">Protease</keyword>
<keyword id="KW-1185">Reference proteome</keyword>
<keyword id="KW-0812">Transmembrane</keyword>
<keyword id="KW-1133">Transmembrane helix</keyword>
<keyword id="KW-0862">Zinc</keyword>
<evidence type="ECO:0000255" key="1">
    <source>
        <dbReference type="HAMAP-Rule" id="MF_00188"/>
    </source>
</evidence>
<reference key="1">
    <citation type="journal article" date="2008" name="PLoS ONE">
        <title>Genetic basis of virulence attenuation revealed by comparative genomic analysis of Mycobacterium tuberculosis strain H37Ra versus H37Rv.</title>
        <authorList>
            <person name="Zheng H."/>
            <person name="Lu L."/>
            <person name="Wang B."/>
            <person name="Pu S."/>
            <person name="Zhang X."/>
            <person name="Zhu G."/>
            <person name="Shi W."/>
            <person name="Zhang L."/>
            <person name="Wang H."/>
            <person name="Wang S."/>
            <person name="Zhao G."/>
            <person name="Zhang Y."/>
        </authorList>
    </citation>
    <scope>NUCLEOTIDE SEQUENCE [LARGE SCALE GENOMIC DNA]</scope>
    <source>
        <strain>ATCC 25177 / H37Ra</strain>
    </source>
</reference>
<accession>A5TZU3</accession>
<sequence length="286" mass="30682">MTWHPHANRLKTFLLLVGMSALIVAVGALFGRTALMLAALFAVGMNVYVYFNSDKLALRAMHAQPVSELQAPAMYRIVRELATSAHQPMPRLYISDTAAPNAFATGRNPRNAAVCCTTGILRILNERELRAVLGHELSHVYNRDILISCVAGALAAVITALANMAMWAGMFGGNRDNANPFALLLVALLGPIAATVIRMAVSRSREYQADESGAVLTGDPLALASALRKISGGVQAAPLPPEPQLASQAHLMIANPFRAGERIGSLFSTHPPIEDRIRRLEAMARG</sequence>